<reference key="1">
    <citation type="submission" date="2007-12" db="EMBL/GenBank/DDBJ databases">
        <title>Complete sequence of Methylobacterium extorquens PA1.</title>
        <authorList>
            <consortium name="US DOE Joint Genome Institute"/>
            <person name="Copeland A."/>
            <person name="Lucas S."/>
            <person name="Lapidus A."/>
            <person name="Barry K."/>
            <person name="Glavina del Rio T."/>
            <person name="Dalin E."/>
            <person name="Tice H."/>
            <person name="Pitluck S."/>
            <person name="Saunders E."/>
            <person name="Brettin T."/>
            <person name="Bruce D."/>
            <person name="Detter J.C."/>
            <person name="Han C."/>
            <person name="Schmutz J."/>
            <person name="Larimer F."/>
            <person name="Land M."/>
            <person name="Hauser L."/>
            <person name="Kyrpides N."/>
            <person name="Kim E."/>
            <person name="Marx C."/>
            <person name="Richardson P."/>
        </authorList>
    </citation>
    <scope>NUCLEOTIDE SEQUENCE [LARGE SCALE GENOMIC DNA]</scope>
    <source>
        <strain>PA1</strain>
    </source>
</reference>
<keyword id="KW-0067">ATP-binding</keyword>
<keyword id="KW-0143">Chaperone</keyword>
<keyword id="KW-0479">Metal-binding</keyword>
<keyword id="KW-0547">Nucleotide-binding</keyword>
<keyword id="KW-0862">Zinc</keyword>
<dbReference type="EMBL" id="CP000908">
    <property type="protein sequence ID" value="ABY30812.1"/>
    <property type="molecule type" value="Genomic_DNA"/>
</dbReference>
<dbReference type="RefSeq" id="WP_003600394.1">
    <property type="nucleotide sequence ID" value="NC_010172.1"/>
</dbReference>
<dbReference type="SMR" id="A9W5F6"/>
<dbReference type="GeneID" id="72990088"/>
<dbReference type="KEGG" id="mex:Mext_2417"/>
<dbReference type="eggNOG" id="COG1219">
    <property type="taxonomic scope" value="Bacteria"/>
</dbReference>
<dbReference type="HOGENOM" id="CLU_014218_8_2_5"/>
<dbReference type="BioCyc" id="MEXT419610:MEXT_RS12180-MONOMER"/>
<dbReference type="GO" id="GO:0009376">
    <property type="term" value="C:HslUV protease complex"/>
    <property type="evidence" value="ECO:0007669"/>
    <property type="project" value="TreeGrafter"/>
</dbReference>
<dbReference type="GO" id="GO:0005524">
    <property type="term" value="F:ATP binding"/>
    <property type="evidence" value="ECO:0007669"/>
    <property type="project" value="UniProtKB-UniRule"/>
</dbReference>
<dbReference type="GO" id="GO:0016887">
    <property type="term" value="F:ATP hydrolysis activity"/>
    <property type="evidence" value="ECO:0007669"/>
    <property type="project" value="InterPro"/>
</dbReference>
<dbReference type="GO" id="GO:0140662">
    <property type="term" value="F:ATP-dependent protein folding chaperone"/>
    <property type="evidence" value="ECO:0007669"/>
    <property type="project" value="InterPro"/>
</dbReference>
<dbReference type="GO" id="GO:0046983">
    <property type="term" value="F:protein dimerization activity"/>
    <property type="evidence" value="ECO:0007669"/>
    <property type="project" value="InterPro"/>
</dbReference>
<dbReference type="GO" id="GO:0051082">
    <property type="term" value="F:unfolded protein binding"/>
    <property type="evidence" value="ECO:0007669"/>
    <property type="project" value="UniProtKB-UniRule"/>
</dbReference>
<dbReference type="GO" id="GO:0008270">
    <property type="term" value="F:zinc ion binding"/>
    <property type="evidence" value="ECO:0007669"/>
    <property type="project" value="InterPro"/>
</dbReference>
<dbReference type="GO" id="GO:0051301">
    <property type="term" value="P:cell division"/>
    <property type="evidence" value="ECO:0007669"/>
    <property type="project" value="TreeGrafter"/>
</dbReference>
<dbReference type="GO" id="GO:0051603">
    <property type="term" value="P:proteolysis involved in protein catabolic process"/>
    <property type="evidence" value="ECO:0007669"/>
    <property type="project" value="TreeGrafter"/>
</dbReference>
<dbReference type="CDD" id="cd19497">
    <property type="entry name" value="RecA-like_ClpX"/>
    <property type="match status" value="1"/>
</dbReference>
<dbReference type="FunFam" id="1.10.8.60:FF:000002">
    <property type="entry name" value="ATP-dependent Clp protease ATP-binding subunit ClpX"/>
    <property type="match status" value="1"/>
</dbReference>
<dbReference type="FunFam" id="3.40.50.300:FF:000005">
    <property type="entry name" value="ATP-dependent Clp protease ATP-binding subunit ClpX"/>
    <property type="match status" value="1"/>
</dbReference>
<dbReference type="Gene3D" id="1.10.8.60">
    <property type="match status" value="1"/>
</dbReference>
<dbReference type="Gene3D" id="6.20.220.10">
    <property type="entry name" value="ClpX chaperone, C4-type zinc finger domain"/>
    <property type="match status" value="1"/>
</dbReference>
<dbReference type="Gene3D" id="3.40.50.300">
    <property type="entry name" value="P-loop containing nucleotide triphosphate hydrolases"/>
    <property type="match status" value="1"/>
</dbReference>
<dbReference type="HAMAP" id="MF_00175">
    <property type="entry name" value="ClpX"/>
    <property type="match status" value="1"/>
</dbReference>
<dbReference type="InterPro" id="IPR003593">
    <property type="entry name" value="AAA+_ATPase"/>
</dbReference>
<dbReference type="InterPro" id="IPR050052">
    <property type="entry name" value="ATP-dep_Clp_protease_ClpX"/>
</dbReference>
<dbReference type="InterPro" id="IPR003959">
    <property type="entry name" value="ATPase_AAA_core"/>
</dbReference>
<dbReference type="InterPro" id="IPR019489">
    <property type="entry name" value="Clp_ATPase_C"/>
</dbReference>
<dbReference type="InterPro" id="IPR004487">
    <property type="entry name" value="Clp_protease_ATP-bd_su_ClpX"/>
</dbReference>
<dbReference type="InterPro" id="IPR046425">
    <property type="entry name" value="ClpX_bact"/>
</dbReference>
<dbReference type="InterPro" id="IPR027417">
    <property type="entry name" value="P-loop_NTPase"/>
</dbReference>
<dbReference type="InterPro" id="IPR010603">
    <property type="entry name" value="Znf_CppX_C4"/>
</dbReference>
<dbReference type="InterPro" id="IPR038366">
    <property type="entry name" value="Znf_CppX_C4_sf"/>
</dbReference>
<dbReference type="NCBIfam" id="TIGR00382">
    <property type="entry name" value="clpX"/>
    <property type="match status" value="1"/>
</dbReference>
<dbReference type="NCBIfam" id="NF003745">
    <property type="entry name" value="PRK05342.1"/>
    <property type="match status" value="1"/>
</dbReference>
<dbReference type="PANTHER" id="PTHR48102:SF7">
    <property type="entry name" value="ATP-DEPENDENT CLP PROTEASE ATP-BINDING SUBUNIT CLPX-LIKE, MITOCHONDRIAL"/>
    <property type="match status" value="1"/>
</dbReference>
<dbReference type="PANTHER" id="PTHR48102">
    <property type="entry name" value="ATP-DEPENDENT CLP PROTEASE ATP-BINDING SUBUNIT CLPX-LIKE, MITOCHONDRIAL-RELATED"/>
    <property type="match status" value="1"/>
</dbReference>
<dbReference type="Pfam" id="PF07724">
    <property type="entry name" value="AAA_2"/>
    <property type="match status" value="1"/>
</dbReference>
<dbReference type="Pfam" id="PF10431">
    <property type="entry name" value="ClpB_D2-small"/>
    <property type="match status" value="1"/>
</dbReference>
<dbReference type="Pfam" id="PF06689">
    <property type="entry name" value="zf-C4_ClpX"/>
    <property type="match status" value="1"/>
</dbReference>
<dbReference type="SMART" id="SM00382">
    <property type="entry name" value="AAA"/>
    <property type="match status" value="1"/>
</dbReference>
<dbReference type="SMART" id="SM01086">
    <property type="entry name" value="ClpB_D2-small"/>
    <property type="match status" value="1"/>
</dbReference>
<dbReference type="SMART" id="SM00994">
    <property type="entry name" value="zf-C4_ClpX"/>
    <property type="match status" value="1"/>
</dbReference>
<dbReference type="SUPFAM" id="SSF57716">
    <property type="entry name" value="Glucocorticoid receptor-like (DNA-binding domain)"/>
    <property type="match status" value="1"/>
</dbReference>
<dbReference type="SUPFAM" id="SSF52540">
    <property type="entry name" value="P-loop containing nucleoside triphosphate hydrolases"/>
    <property type="match status" value="1"/>
</dbReference>
<dbReference type="PROSITE" id="PS51902">
    <property type="entry name" value="CLPX_ZB"/>
    <property type="match status" value="1"/>
</dbReference>
<sequence>MSKTGGNDSKSTLYCSFCGKSQHEVRKLIAGPTVFICDECVELCMDIIREESKSSLVKSRDGVPTPKEIRRVLDDYVIGQDFAKKVLSVAVHNHYKRLAHATKHNDVELAKSNIMLIGPTGSGKTLLAQTLARILDVPFTMADATTLTEAGYVGEDVENIILKLLQASDYNVERAQRGIVYIDEIDKISRKSDNPSITRDVSGEGVQQALLKIMEGTVASVPPQGGRKHPQQEFLQVDTTNILFICGGAFAGLERIISQRGKGTSIGFGASVQAPDDRRTGEVFRSVEPEDLLKFGLIPEFVGRLPVLATLEDLDEEALKKILQEPKNALVKQYQRLFEMENVELTFQDEALSLVARKAIERKTGARGLRSILETILLDTMYDLPGLESVEQVVIGPEVVEGKSRPLFIHGDRNKEAPASVSA</sequence>
<name>CLPX_METEP</name>
<accession>A9W5F6</accession>
<organism>
    <name type="scientific">Methylorubrum extorquens (strain PA1)</name>
    <name type="common">Methylobacterium extorquens</name>
    <dbReference type="NCBI Taxonomy" id="419610"/>
    <lineage>
        <taxon>Bacteria</taxon>
        <taxon>Pseudomonadati</taxon>
        <taxon>Pseudomonadota</taxon>
        <taxon>Alphaproteobacteria</taxon>
        <taxon>Hyphomicrobiales</taxon>
        <taxon>Methylobacteriaceae</taxon>
        <taxon>Methylorubrum</taxon>
    </lineage>
</organism>
<protein>
    <recommendedName>
        <fullName evidence="1">ATP-dependent Clp protease ATP-binding subunit ClpX</fullName>
    </recommendedName>
</protein>
<feature type="chain" id="PRO_1000097967" description="ATP-dependent Clp protease ATP-binding subunit ClpX">
    <location>
        <begin position="1"/>
        <end position="423"/>
    </location>
</feature>
<feature type="domain" description="ClpX-type ZB" evidence="2">
    <location>
        <begin position="3"/>
        <end position="56"/>
    </location>
</feature>
<feature type="binding site" evidence="2">
    <location>
        <position position="15"/>
    </location>
    <ligand>
        <name>Zn(2+)</name>
        <dbReference type="ChEBI" id="CHEBI:29105"/>
    </ligand>
</feature>
<feature type="binding site" evidence="2">
    <location>
        <position position="18"/>
    </location>
    <ligand>
        <name>Zn(2+)</name>
        <dbReference type="ChEBI" id="CHEBI:29105"/>
    </ligand>
</feature>
<feature type="binding site" evidence="2">
    <location>
        <position position="37"/>
    </location>
    <ligand>
        <name>Zn(2+)</name>
        <dbReference type="ChEBI" id="CHEBI:29105"/>
    </ligand>
</feature>
<feature type="binding site" evidence="2">
    <location>
        <position position="40"/>
    </location>
    <ligand>
        <name>Zn(2+)</name>
        <dbReference type="ChEBI" id="CHEBI:29105"/>
    </ligand>
</feature>
<feature type="binding site" evidence="1">
    <location>
        <begin position="119"/>
        <end position="126"/>
    </location>
    <ligand>
        <name>ATP</name>
        <dbReference type="ChEBI" id="CHEBI:30616"/>
    </ligand>
</feature>
<evidence type="ECO:0000255" key="1">
    <source>
        <dbReference type="HAMAP-Rule" id="MF_00175"/>
    </source>
</evidence>
<evidence type="ECO:0000255" key="2">
    <source>
        <dbReference type="PROSITE-ProRule" id="PRU01250"/>
    </source>
</evidence>
<comment type="function">
    <text evidence="1">ATP-dependent specificity component of the Clp protease. It directs the protease to specific substrates. Can perform chaperone functions in the absence of ClpP.</text>
</comment>
<comment type="subunit">
    <text evidence="1">Component of the ClpX-ClpP complex. Forms a hexameric ring that, in the presence of ATP, binds to fourteen ClpP subunits assembled into a disk-like structure with a central cavity, resembling the structure of eukaryotic proteasomes.</text>
</comment>
<comment type="similarity">
    <text evidence="1">Belongs to the ClpX chaperone family.</text>
</comment>
<proteinExistence type="inferred from homology"/>
<gene>
    <name evidence="1" type="primary">clpX</name>
    <name type="ordered locus">Mext_2417</name>
</gene>